<sequence>MECPIIALSVGFSNNSQPYVEAIIKAGGCPIVIYPGLQRNSIPPNIDGIILAGGESVHPNRYGEDFDPNAPKSVDVIRDSTEWGMIDFALKKKIPILGICRGCQVLNVYFGGSLYQNVSSCGFRDIHRPSKPRHYLAHKVMAKPGKLKNILGSNVIDVNSIHDQGIKTLGMGLQSTVISDDGLCEGIESKDGLIIGVQWHPEAIIDKQPHSLKLFQYFINRSKWHMKQSNIFSNVPHESSFYRNSIISIPIAP</sequence>
<dbReference type="EMBL" id="CU329671">
    <property type="protein sequence ID" value="CAC21407.2"/>
    <property type="molecule type" value="Genomic_DNA"/>
</dbReference>
<dbReference type="RefSeq" id="NP_596851.2">
    <property type="nucleotide sequence ID" value="NM_001023874.2"/>
</dbReference>
<dbReference type="SMR" id="Q9HDV0"/>
<dbReference type="BioGRID" id="277870">
    <property type="interactions" value="3"/>
</dbReference>
<dbReference type="FunCoup" id="Q9HDV0">
    <property type="interactions" value="53"/>
</dbReference>
<dbReference type="STRING" id="284812.Q9HDV0"/>
<dbReference type="MEROPS" id="C26.A28"/>
<dbReference type="PaxDb" id="4896-SPBPB2B2.05.1"/>
<dbReference type="EnsemblFungi" id="SPBPB2B2.05.1">
    <property type="protein sequence ID" value="SPBPB2B2.05.1:pep"/>
    <property type="gene ID" value="SPBPB2B2.05"/>
</dbReference>
<dbReference type="KEGG" id="spo:2541359"/>
<dbReference type="PomBase" id="SPBPB2B2.05"/>
<dbReference type="VEuPathDB" id="FungiDB:SPBPB2B2.05"/>
<dbReference type="eggNOG" id="ENOG502QR1H">
    <property type="taxonomic scope" value="Eukaryota"/>
</dbReference>
<dbReference type="HOGENOM" id="CLU_030756_4_0_1"/>
<dbReference type="InParanoid" id="Q9HDV0"/>
<dbReference type="OMA" id="HRMPPDG"/>
<dbReference type="PRO" id="PR:Q9HDV0"/>
<dbReference type="Proteomes" id="UP000002485">
    <property type="component" value="Chromosome II"/>
</dbReference>
<dbReference type="GO" id="GO:0005737">
    <property type="term" value="C:cytoplasm"/>
    <property type="evidence" value="ECO:0007005"/>
    <property type="project" value="PomBase"/>
</dbReference>
<dbReference type="GO" id="GO:0005829">
    <property type="term" value="C:cytosol"/>
    <property type="evidence" value="ECO:0007005"/>
    <property type="project" value="PomBase"/>
</dbReference>
<dbReference type="GO" id="GO:0005634">
    <property type="term" value="C:nucleus"/>
    <property type="evidence" value="ECO:0007005"/>
    <property type="project" value="PomBase"/>
</dbReference>
<dbReference type="GO" id="GO:0016811">
    <property type="term" value="F:hydrolase activity, acting on carbon-nitrogen (but not peptide) bonds, in linear amides"/>
    <property type="evidence" value="ECO:0000255"/>
    <property type="project" value="PomBase"/>
</dbReference>
<dbReference type="GO" id="GO:0016874">
    <property type="term" value="F:ligase activity"/>
    <property type="evidence" value="ECO:0007669"/>
    <property type="project" value="UniProtKB-KW"/>
</dbReference>
<dbReference type="CDD" id="cd01745">
    <property type="entry name" value="GATase1_2"/>
    <property type="match status" value="1"/>
</dbReference>
<dbReference type="Gene3D" id="3.40.50.880">
    <property type="match status" value="1"/>
</dbReference>
<dbReference type="InterPro" id="IPR029062">
    <property type="entry name" value="Class_I_gatase-like"/>
</dbReference>
<dbReference type="InterPro" id="IPR011697">
    <property type="entry name" value="Peptidase_C26"/>
</dbReference>
<dbReference type="InterPro" id="IPR044668">
    <property type="entry name" value="PuuD-like"/>
</dbReference>
<dbReference type="PANTHER" id="PTHR43235">
    <property type="entry name" value="GLUTAMINE AMIDOTRANSFERASE PB2B2.05-RELATED"/>
    <property type="match status" value="1"/>
</dbReference>
<dbReference type="PANTHER" id="PTHR43235:SF1">
    <property type="entry name" value="GLUTAMINE AMIDOTRANSFERASE PB2B2.05-RELATED"/>
    <property type="match status" value="1"/>
</dbReference>
<dbReference type="Pfam" id="PF07722">
    <property type="entry name" value="Peptidase_C26"/>
    <property type="match status" value="1"/>
</dbReference>
<dbReference type="SUPFAM" id="SSF52317">
    <property type="entry name" value="Class I glutamine amidotransferase-like"/>
    <property type="match status" value="1"/>
</dbReference>
<dbReference type="PROSITE" id="PS51273">
    <property type="entry name" value="GATASE_TYPE_1"/>
    <property type="match status" value="1"/>
</dbReference>
<evidence type="ECO:0000255" key="1">
    <source>
        <dbReference type="PROSITE-ProRule" id="PRU00605"/>
    </source>
</evidence>
<evidence type="ECO:0000269" key="2">
    <source>
    </source>
</evidence>
<organism>
    <name type="scientific">Schizosaccharomyces pombe (strain 972 / ATCC 24843)</name>
    <name type="common">Fission yeast</name>
    <dbReference type="NCBI Taxonomy" id="284812"/>
    <lineage>
        <taxon>Eukaryota</taxon>
        <taxon>Fungi</taxon>
        <taxon>Dikarya</taxon>
        <taxon>Ascomycota</taxon>
        <taxon>Taphrinomycotina</taxon>
        <taxon>Schizosaccharomycetes</taxon>
        <taxon>Schizosaccharomycetales</taxon>
        <taxon>Schizosaccharomycetaceae</taxon>
        <taxon>Schizosaccharomyces</taxon>
    </lineage>
</organism>
<accession>Q9HDV0</accession>
<reference key="1">
    <citation type="journal article" date="2002" name="Nature">
        <title>The genome sequence of Schizosaccharomyces pombe.</title>
        <authorList>
            <person name="Wood V."/>
            <person name="Gwilliam R."/>
            <person name="Rajandream M.A."/>
            <person name="Lyne M.H."/>
            <person name="Lyne R."/>
            <person name="Stewart A."/>
            <person name="Sgouros J.G."/>
            <person name="Peat N."/>
            <person name="Hayles J."/>
            <person name="Baker S.G."/>
            <person name="Basham D."/>
            <person name="Bowman S."/>
            <person name="Brooks K."/>
            <person name="Brown D."/>
            <person name="Brown S."/>
            <person name="Chillingworth T."/>
            <person name="Churcher C.M."/>
            <person name="Collins M."/>
            <person name="Connor R."/>
            <person name="Cronin A."/>
            <person name="Davis P."/>
            <person name="Feltwell T."/>
            <person name="Fraser A."/>
            <person name="Gentles S."/>
            <person name="Goble A."/>
            <person name="Hamlin N."/>
            <person name="Harris D.E."/>
            <person name="Hidalgo J."/>
            <person name="Hodgson G."/>
            <person name="Holroyd S."/>
            <person name="Hornsby T."/>
            <person name="Howarth S."/>
            <person name="Huckle E.J."/>
            <person name="Hunt S."/>
            <person name="Jagels K."/>
            <person name="James K.D."/>
            <person name="Jones L."/>
            <person name="Jones M."/>
            <person name="Leather S."/>
            <person name="McDonald S."/>
            <person name="McLean J."/>
            <person name="Mooney P."/>
            <person name="Moule S."/>
            <person name="Mungall K.L."/>
            <person name="Murphy L.D."/>
            <person name="Niblett D."/>
            <person name="Odell C."/>
            <person name="Oliver K."/>
            <person name="O'Neil S."/>
            <person name="Pearson D."/>
            <person name="Quail M.A."/>
            <person name="Rabbinowitsch E."/>
            <person name="Rutherford K.M."/>
            <person name="Rutter S."/>
            <person name="Saunders D."/>
            <person name="Seeger K."/>
            <person name="Sharp S."/>
            <person name="Skelton J."/>
            <person name="Simmonds M.N."/>
            <person name="Squares R."/>
            <person name="Squares S."/>
            <person name="Stevens K."/>
            <person name="Taylor K."/>
            <person name="Taylor R.G."/>
            <person name="Tivey A."/>
            <person name="Walsh S.V."/>
            <person name="Warren T."/>
            <person name="Whitehead S."/>
            <person name="Woodward J.R."/>
            <person name="Volckaert G."/>
            <person name="Aert R."/>
            <person name="Robben J."/>
            <person name="Grymonprez B."/>
            <person name="Weltjens I."/>
            <person name="Vanstreels E."/>
            <person name="Rieger M."/>
            <person name="Schaefer M."/>
            <person name="Mueller-Auer S."/>
            <person name="Gabel C."/>
            <person name="Fuchs M."/>
            <person name="Duesterhoeft A."/>
            <person name="Fritzc C."/>
            <person name="Holzer E."/>
            <person name="Moestl D."/>
            <person name="Hilbert H."/>
            <person name="Borzym K."/>
            <person name="Langer I."/>
            <person name="Beck A."/>
            <person name="Lehrach H."/>
            <person name="Reinhardt R."/>
            <person name="Pohl T.M."/>
            <person name="Eger P."/>
            <person name="Zimmermann W."/>
            <person name="Wedler H."/>
            <person name="Wambutt R."/>
            <person name="Purnelle B."/>
            <person name="Goffeau A."/>
            <person name="Cadieu E."/>
            <person name="Dreano S."/>
            <person name="Gloux S."/>
            <person name="Lelaure V."/>
            <person name="Mottier S."/>
            <person name="Galibert F."/>
            <person name="Aves S.J."/>
            <person name="Xiang Z."/>
            <person name="Hunt C."/>
            <person name="Moore K."/>
            <person name="Hurst S.M."/>
            <person name="Lucas M."/>
            <person name="Rochet M."/>
            <person name="Gaillardin C."/>
            <person name="Tallada V.A."/>
            <person name="Garzon A."/>
            <person name="Thode G."/>
            <person name="Daga R.R."/>
            <person name="Cruzado L."/>
            <person name="Jimenez J."/>
            <person name="Sanchez M."/>
            <person name="del Rey F."/>
            <person name="Benito J."/>
            <person name="Dominguez A."/>
            <person name="Revuelta J.L."/>
            <person name="Moreno S."/>
            <person name="Armstrong J."/>
            <person name="Forsburg S.L."/>
            <person name="Cerutti L."/>
            <person name="Lowe T."/>
            <person name="McCombie W.R."/>
            <person name="Paulsen I."/>
            <person name="Potashkin J."/>
            <person name="Shpakovski G.V."/>
            <person name="Ussery D."/>
            <person name="Barrell B.G."/>
            <person name="Nurse P."/>
        </authorList>
    </citation>
    <scope>NUCLEOTIDE SEQUENCE [LARGE SCALE GENOMIC DNA]</scope>
    <source>
        <strain>972 / ATCC 24843</strain>
    </source>
</reference>
<reference key="2">
    <citation type="journal article" date="2011" name="Science">
        <title>Comparative functional genomics of the fission yeasts.</title>
        <authorList>
            <person name="Rhind N."/>
            <person name="Chen Z."/>
            <person name="Yassour M."/>
            <person name="Thompson D.A."/>
            <person name="Haas B.J."/>
            <person name="Habib N."/>
            <person name="Wapinski I."/>
            <person name="Roy S."/>
            <person name="Lin M.F."/>
            <person name="Heiman D.I."/>
            <person name="Young S.K."/>
            <person name="Furuya K."/>
            <person name="Guo Y."/>
            <person name="Pidoux A."/>
            <person name="Chen H.M."/>
            <person name="Robbertse B."/>
            <person name="Goldberg J.M."/>
            <person name="Aoki K."/>
            <person name="Bayne E.H."/>
            <person name="Berlin A.M."/>
            <person name="Desjardins C.A."/>
            <person name="Dobbs E."/>
            <person name="Dukaj L."/>
            <person name="Fan L."/>
            <person name="FitzGerald M.G."/>
            <person name="French C."/>
            <person name="Gujja S."/>
            <person name="Hansen K."/>
            <person name="Keifenheim D."/>
            <person name="Levin J.Z."/>
            <person name="Mosher R.A."/>
            <person name="Mueller C.A."/>
            <person name="Pfiffner J."/>
            <person name="Priest M."/>
            <person name="Russ C."/>
            <person name="Smialowska A."/>
            <person name="Swoboda P."/>
            <person name="Sykes S.M."/>
            <person name="Vaughn M."/>
            <person name="Vengrova S."/>
            <person name="Yoder R."/>
            <person name="Zeng Q."/>
            <person name="Allshire R."/>
            <person name="Baulcombe D."/>
            <person name="Birren B.W."/>
            <person name="Brown W."/>
            <person name="Ekwall K."/>
            <person name="Kellis M."/>
            <person name="Leatherwood J."/>
            <person name="Levin H."/>
            <person name="Margalit H."/>
            <person name="Martienssen R."/>
            <person name="Nieduszynski C.A."/>
            <person name="Spatafora J.W."/>
            <person name="Friedman N."/>
            <person name="Dalgaard J.Z."/>
            <person name="Baumann P."/>
            <person name="Niki H."/>
            <person name="Regev A."/>
            <person name="Nusbaum C."/>
        </authorList>
    </citation>
    <scope>REVISION OF GENE MODEL</scope>
</reference>
<reference key="3">
    <citation type="journal article" date="2006" name="Nat. Biotechnol.">
        <title>ORFeome cloning and global analysis of protein localization in the fission yeast Schizosaccharomyces pombe.</title>
        <authorList>
            <person name="Matsuyama A."/>
            <person name="Arai R."/>
            <person name="Yashiroda Y."/>
            <person name="Shirai A."/>
            <person name="Kamata A."/>
            <person name="Sekido S."/>
            <person name="Kobayashi Y."/>
            <person name="Hashimoto A."/>
            <person name="Hamamoto M."/>
            <person name="Hiraoka Y."/>
            <person name="Horinouchi S."/>
            <person name="Yoshida M."/>
        </authorList>
    </citation>
    <scope>SUBCELLULAR LOCATION [LARGE SCALE ANALYSIS]</scope>
</reference>
<feature type="chain" id="PRO_0000363384" description="Putative glutamine amidotransferase PB2B2.05">
    <location>
        <begin position="1"/>
        <end position="253"/>
    </location>
</feature>
<feature type="domain" description="Glutamine amidotransferase type-1" evidence="1">
    <location>
        <begin position="5"/>
        <end position="228"/>
    </location>
</feature>
<feature type="active site" description="Nucleophile" evidence="1">
    <location>
        <position position="100"/>
    </location>
</feature>
<feature type="active site" evidence="1">
    <location>
        <position position="200"/>
    </location>
</feature>
<feature type="active site" evidence="1">
    <location>
        <position position="202"/>
    </location>
</feature>
<gene>
    <name type="ORF">SPBPB2B2.05</name>
</gene>
<keyword id="KW-0963">Cytoplasm</keyword>
<keyword id="KW-0315">Glutamine amidotransferase</keyword>
<keyword id="KW-0436">Ligase</keyword>
<keyword id="KW-0539">Nucleus</keyword>
<keyword id="KW-1185">Reference proteome</keyword>
<protein>
    <recommendedName>
        <fullName>Putative glutamine amidotransferase PB2B2.05</fullName>
    </recommendedName>
</protein>
<proteinExistence type="predicted"/>
<name>YHE5_SCHPO</name>
<comment type="subcellular location">
    <subcellularLocation>
        <location evidence="2">Cytoplasm</location>
    </subcellularLocation>
    <subcellularLocation>
        <location evidence="2">Nucleus</location>
    </subcellularLocation>
</comment>